<name>KTR5_YEAST</name>
<proteinExistence type="evidence at protein level"/>
<keyword id="KW-0325">Glycoprotein</keyword>
<keyword id="KW-0328">Glycosyltransferase</keyword>
<keyword id="KW-0472">Membrane</keyword>
<keyword id="KW-1185">Reference proteome</keyword>
<keyword id="KW-0735">Signal-anchor</keyword>
<keyword id="KW-0808">Transferase</keyword>
<keyword id="KW-0812">Transmembrane</keyword>
<keyword id="KW-1133">Transmembrane helix</keyword>
<evidence type="ECO:0000250" key="1"/>
<evidence type="ECO:0000255" key="2"/>
<evidence type="ECO:0000269" key="3">
    <source>
    </source>
</evidence>
<evidence type="ECO:0000305" key="4"/>
<sequence>MLLIRRTINAFLGCIHCNLTATCILIAFVITMYVVLVSEPASVDGTMGNFLPFSKMDLATKRDRPFYSNCVNTQDYLLNPSYIKQNASFVMLTRNGELEDVIKTINSIEEHFNQWFHYPYVFLNDQPFEEDFKAKVRDVTVGALVEFGTIDEISWNFPSDVKDTFEFYNAIEDQGDRSILYGNLESYHKMCRFYSGLFYKHPLVQKYEWYWRLEPDVEFFCDITYDPFLEMLRTNKKYGFTIIIPELYWTVPNLFRHTKSFISQKGVTLGSLWKLFTKDYDIFESDDPELRDWINYDFQAKAKISEKIAIEQLLKKGDDFQQINDDKEGIMNLIHKARSRKHIVEDKFFNEEYNLCHFWSNFEIARLSVFDNDIYNSFFQYLEKSGGFWKERWGDAPVHSIGLSLTLDLDDVHYFRDIGYRHSTIQHCPHNAMGNEEFSYLASDSKFKRKNAAYDEGREFGCGCRCRCPKKKREIEDSMGFCVNIWVNLLNQQRGHERHVEALNGNEMEEHIREDYLRQFGN</sequence>
<organism>
    <name type="scientific">Saccharomyces cerevisiae (strain ATCC 204508 / S288c)</name>
    <name type="common">Baker's yeast</name>
    <dbReference type="NCBI Taxonomy" id="559292"/>
    <lineage>
        <taxon>Eukaryota</taxon>
        <taxon>Fungi</taxon>
        <taxon>Dikarya</taxon>
        <taxon>Ascomycota</taxon>
        <taxon>Saccharomycotina</taxon>
        <taxon>Saccharomycetes</taxon>
        <taxon>Saccharomycetales</taxon>
        <taxon>Saccharomycetaceae</taxon>
        <taxon>Saccharomyces</taxon>
    </lineage>
</organism>
<comment type="function">
    <text>Possible glycosyltransferase that transfers an alpha-D-mannosyl residue from GDP-mannose into lipid-linked oligosaccharide, forming an alpha-(1-&gt;2)-D-mannosyl-D-mannose linkage.</text>
</comment>
<comment type="subcellular location">
    <subcellularLocation>
        <location evidence="4">Membrane</location>
        <topology evidence="4">Single-pass type II membrane protein</topology>
    </subcellularLocation>
</comment>
<comment type="miscellaneous">
    <text evidence="3">Present with 450 molecules/cell in log phase SD medium.</text>
</comment>
<comment type="similarity">
    <text evidence="4">Belongs to the glycosyltransferase 15 family.</text>
</comment>
<accession>P53966</accession>
<accession>D6W1F0</accession>
<protein>
    <recommendedName>
        <fullName>Probable mannosyltransferase KTR5</fullName>
        <ecNumber>2.4.1.-</ecNumber>
    </recommendedName>
</protein>
<gene>
    <name type="primary">KTR5</name>
    <name type="ordered locus">YNL029C</name>
    <name type="ORF">N2755</name>
</gene>
<feature type="chain" id="PRO_0000208246" description="Probable mannosyltransferase KTR5">
    <location>
        <begin position="1"/>
        <end position="522"/>
    </location>
</feature>
<feature type="topological domain" description="Cytoplasmic" evidence="2">
    <location>
        <begin position="1"/>
        <end position="16"/>
    </location>
</feature>
<feature type="transmembrane region" description="Helical; Signal-anchor for type II membrane protein" evidence="2">
    <location>
        <begin position="17"/>
        <end position="37"/>
    </location>
</feature>
<feature type="topological domain" description="Lumenal" evidence="2">
    <location>
        <begin position="38"/>
        <end position="522"/>
    </location>
</feature>
<feature type="region of interest" description="Stem region" evidence="1">
    <location>
        <begin position="38"/>
        <end position="82"/>
    </location>
</feature>
<feature type="region of interest" description="Catalytic" evidence="1">
    <location>
        <begin position="83"/>
        <end position="522"/>
    </location>
</feature>
<feature type="active site" description="Nucleophile" evidence="2">
    <location>
        <position position="363"/>
    </location>
</feature>
<feature type="glycosylation site" description="N-linked (GlcNAc...) asparagine" evidence="2">
    <location>
        <position position="86"/>
    </location>
</feature>
<reference key="1">
    <citation type="journal article" date="1997" name="Nature">
        <title>The nucleotide sequence of Saccharomyces cerevisiae chromosome XIV and its evolutionary implications.</title>
        <authorList>
            <person name="Philippsen P."/>
            <person name="Kleine K."/>
            <person name="Poehlmann R."/>
            <person name="Duesterhoeft A."/>
            <person name="Hamberg K."/>
            <person name="Hegemann J.H."/>
            <person name="Obermaier B."/>
            <person name="Urrestarazu L.A."/>
            <person name="Aert R."/>
            <person name="Albermann K."/>
            <person name="Altmann R."/>
            <person name="Andre B."/>
            <person name="Baladron V."/>
            <person name="Ballesta J.P.G."/>
            <person name="Becam A.-M."/>
            <person name="Beinhauer J.D."/>
            <person name="Boskovic J."/>
            <person name="Buitrago M.J."/>
            <person name="Bussereau F."/>
            <person name="Coster F."/>
            <person name="Crouzet M."/>
            <person name="D'Angelo M."/>
            <person name="Dal Pero F."/>
            <person name="De Antoni A."/>
            <person name="del Rey F."/>
            <person name="Doignon F."/>
            <person name="Domdey H."/>
            <person name="Dubois E."/>
            <person name="Fiedler T.A."/>
            <person name="Fleig U."/>
            <person name="Floeth M."/>
            <person name="Fritz C."/>
            <person name="Gaillardin C."/>
            <person name="Garcia-Cantalejo J.M."/>
            <person name="Glansdorff N."/>
            <person name="Goffeau A."/>
            <person name="Gueldener U."/>
            <person name="Herbert C.J."/>
            <person name="Heumann K."/>
            <person name="Heuss-Neitzel D."/>
            <person name="Hilbert H."/>
            <person name="Hinni K."/>
            <person name="Iraqui Houssaini I."/>
            <person name="Jacquet M."/>
            <person name="Jimenez A."/>
            <person name="Jonniaux J.-L."/>
            <person name="Karpfinger-Hartl L."/>
            <person name="Lanfranchi G."/>
            <person name="Lepingle A."/>
            <person name="Levesque H."/>
            <person name="Lyck R."/>
            <person name="Maftahi M."/>
            <person name="Mallet L."/>
            <person name="Maurer C.T.C."/>
            <person name="Messenguy F."/>
            <person name="Mewes H.-W."/>
            <person name="Moestl D."/>
            <person name="Nasr F."/>
            <person name="Nicaud J.-M."/>
            <person name="Niedenthal R.K."/>
            <person name="Pandolfo D."/>
            <person name="Pierard A."/>
            <person name="Piravandi E."/>
            <person name="Planta R.J."/>
            <person name="Pohl T.M."/>
            <person name="Purnelle B."/>
            <person name="Rebischung C."/>
            <person name="Remacha M.A."/>
            <person name="Revuelta J.L."/>
            <person name="Rinke M."/>
            <person name="Saiz J.E."/>
            <person name="Sartorello F."/>
            <person name="Scherens B."/>
            <person name="Sen-Gupta M."/>
            <person name="Soler-Mira A."/>
            <person name="Urbanus J.H.M."/>
            <person name="Valle G."/>
            <person name="Van Dyck L."/>
            <person name="Verhasselt P."/>
            <person name="Vierendeels F."/>
            <person name="Vissers S."/>
            <person name="Voet M."/>
            <person name="Volckaert G."/>
            <person name="Wach A."/>
            <person name="Wambutt R."/>
            <person name="Wedler H."/>
            <person name="Zollner A."/>
            <person name="Hani J."/>
        </authorList>
    </citation>
    <scope>NUCLEOTIDE SEQUENCE [LARGE SCALE GENOMIC DNA]</scope>
    <source>
        <strain>ATCC 204508 / S288c</strain>
    </source>
</reference>
<reference key="2">
    <citation type="journal article" date="2014" name="G3 (Bethesda)">
        <title>The reference genome sequence of Saccharomyces cerevisiae: Then and now.</title>
        <authorList>
            <person name="Engel S.R."/>
            <person name="Dietrich F.S."/>
            <person name="Fisk D.G."/>
            <person name="Binkley G."/>
            <person name="Balakrishnan R."/>
            <person name="Costanzo M.C."/>
            <person name="Dwight S.S."/>
            <person name="Hitz B.C."/>
            <person name="Karra K."/>
            <person name="Nash R.S."/>
            <person name="Weng S."/>
            <person name="Wong E.D."/>
            <person name="Lloyd P."/>
            <person name="Skrzypek M.S."/>
            <person name="Miyasato S.R."/>
            <person name="Simison M."/>
            <person name="Cherry J.M."/>
        </authorList>
    </citation>
    <scope>GENOME REANNOTATION</scope>
    <source>
        <strain>ATCC 204508 / S288c</strain>
    </source>
</reference>
<reference key="3">
    <citation type="journal article" date="1997" name="Yeast">
        <title>Completion of the Saccharomyces cerevisiae genome sequence allows identification of KTR5, KTR6 and KTR7 and definition of the nine-membered KRE2/MNT1 mannosyltransferase gene family in this organism.</title>
        <authorList>
            <person name="Lussier M."/>
            <person name="Sdicu A.-M."/>
            <person name="Winnett E."/>
            <person name="Vo D.H."/>
            <person name="Sheraton J."/>
            <person name="Duesterhoeft A."/>
            <person name="Storms R.K."/>
            <person name="Bussey H."/>
        </authorList>
    </citation>
    <scope>CHARACTERIZATION</scope>
</reference>
<reference key="4">
    <citation type="journal article" date="2003" name="Nature">
        <title>Global analysis of protein expression in yeast.</title>
        <authorList>
            <person name="Ghaemmaghami S."/>
            <person name="Huh W.-K."/>
            <person name="Bower K."/>
            <person name="Howson R.W."/>
            <person name="Belle A."/>
            <person name="Dephoure N."/>
            <person name="O'Shea E.K."/>
            <person name="Weissman J.S."/>
        </authorList>
    </citation>
    <scope>LEVEL OF PROTEIN EXPRESSION [LARGE SCALE ANALYSIS]</scope>
</reference>
<dbReference type="EC" id="2.4.1.-"/>
<dbReference type="EMBL" id="Z71305">
    <property type="protein sequence ID" value="CAA95891.1"/>
    <property type="molecule type" value="Genomic_DNA"/>
</dbReference>
<dbReference type="EMBL" id="BK006947">
    <property type="protein sequence ID" value="DAA10516.1"/>
    <property type="molecule type" value="Genomic_DNA"/>
</dbReference>
<dbReference type="PIR" id="S62941">
    <property type="entry name" value="S62941"/>
</dbReference>
<dbReference type="RefSeq" id="NP_014369.3">
    <property type="nucleotide sequence ID" value="NM_001182868.3"/>
</dbReference>
<dbReference type="SMR" id="P53966"/>
<dbReference type="BioGRID" id="35798">
    <property type="interactions" value="44"/>
</dbReference>
<dbReference type="DIP" id="DIP-6646N"/>
<dbReference type="FunCoup" id="P53966">
    <property type="interactions" value="59"/>
</dbReference>
<dbReference type="IntAct" id="P53966">
    <property type="interactions" value="1"/>
</dbReference>
<dbReference type="STRING" id="4932.YNL029C"/>
<dbReference type="CAZy" id="GT15">
    <property type="family name" value="Glycosyltransferase Family 15"/>
</dbReference>
<dbReference type="GlyCosmos" id="P53966">
    <property type="glycosylation" value="1 site, No reported glycans"/>
</dbReference>
<dbReference type="GlyGen" id="P53966">
    <property type="glycosylation" value="1 site"/>
</dbReference>
<dbReference type="iPTMnet" id="P53966"/>
<dbReference type="PaxDb" id="4932-YNL029C"/>
<dbReference type="PeptideAtlas" id="P53966"/>
<dbReference type="TopDownProteomics" id="P53966"/>
<dbReference type="EnsemblFungi" id="YNL029C_mRNA">
    <property type="protein sequence ID" value="YNL029C"/>
    <property type="gene ID" value="YNL029C"/>
</dbReference>
<dbReference type="GeneID" id="855703"/>
<dbReference type="KEGG" id="sce:YNL029C"/>
<dbReference type="AGR" id="SGD:S000004974"/>
<dbReference type="SGD" id="S000004974">
    <property type="gene designation" value="KTR5"/>
</dbReference>
<dbReference type="VEuPathDB" id="FungiDB:YNL029C"/>
<dbReference type="eggNOG" id="KOG4472">
    <property type="taxonomic scope" value="Eukaryota"/>
</dbReference>
<dbReference type="GeneTree" id="ENSGT00940000176287"/>
<dbReference type="HOGENOM" id="CLU_024327_2_0_1"/>
<dbReference type="InParanoid" id="P53966"/>
<dbReference type="OMA" id="TIDEISW"/>
<dbReference type="OrthoDB" id="439943at2759"/>
<dbReference type="BioCyc" id="YEAST:G3O-33066-MONOMER"/>
<dbReference type="BioGRID-ORCS" id="855703">
    <property type="hits" value="1 hit in 10 CRISPR screens"/>
</dbReference>
<dbReference type="ChiTaRS" id="KTR5">
    <property type="organism name" value="yeast"/>
</dbReference>
<dbReference type="PRO" id="PR:P53966"/>
<dbReference type="Proteomes" id="UP000002311">
    <property type="component" value="Chromosome XIV"/>
</dbReference>
<dbReference type="RNAct" id="P53966">
    <property type="molecule type" value="protein"/>
</dbReference>
<dbReference type="GO" id="GO:0005783">
    <property type="term" value="C:endoplasmic reticulum"/>
    <property type="evidence" value="ECO:0007005"/>
    <property type="project" value="SGD"/>
</dbReference>
<dbReference type="GO" id="GO:0005794">
    <property type="term" value="C:Golgi apparatus"/>
    <property type="evidence" value="ECO:0000250"/>
    <property type="project" value="SGD"/>
</dbReference>
<dbReference type="GO" id="GO:0016020">
    <property type="term" value="C:membrane"/>
    <property type="evidence" value="ECO:0007669"/>
    <property type="project" value="UniProtKB-SubCell"/>
</dbReference>
<dbReference type="GO" id="GO:0000026">
    <property type="term" value="F:alpha-1,2-mannosyltransferase activity"/>
    <property type="evidence" value="ECO:0000318"/>
    <property type="project" value="GO_Central"/>
</dbReference>
<dbReference type="GO" id="GO:0000030">
    <property type="term" value="F:mannosyltransferase activity"/>
    <property type="evidence" value="ECO:0000250"/>
    <property type="project" value="SGD"/>
</dbReference>
<dbReference type="GO" id="GO:0000032">
    <property type="term" value="P:cell wall mannoprotein biosynthetic process"/>
    <property type="evidence" value="ECO:0000318"/>
    <property type="project" value="GO_Central"/>
</dbReference>
<dbReference type="GO" id="GO:0006487">
    <property type="term" value="P:protein N-linked glycosylation"/>
    <property type="evidence" value="ECO:0000318"/>
    <property type="project" value="GO_Central"/>
</dbReference>
<dbReference type="Gene3D" id="3.90.550.10">
    <property type="entry name" value="Spore Coat Polysaccharide Biosynthesis Protein SpsA, Chain A"/>
    <property type="match status" value="1"/>
</dbReference>
<dbReference type="InterPro" id="IPR002685">
    <property type="entry name" value="Glyco_trans_15"/>
</dbReference>
<dbReference type="InterPro" id="IPR029044">
    <property type="entry name" value="Nucleotide-diphossugar_trans"/>
</dbReference>
<dbReference type="PANTHER" id="PTHR31121">
    <property type="entry name" value="ALPHA-1,2 MANNOSYLTRANSFERASE KTR1"/>
    <property type="match status" value="1"/>
</dbReference>
<dbReference type="PANTHER" id="PTHR31121:SF2">
    <property type="entry name" value="MANNOSYLTRANSFERASE KTR5-RELATED"/>
    <property type="match status" value="1"/>
</dbReference>
<dbReference type="Pfam" id="PF01793">
    <property type="entry name" value="Glyco_transf_15"/>
    <property type="match status" value="2"/>
</dbReference>
<dbReference type="PIRSF" id="PIRSF018153">
    <property type="entry name" value="Glyco_trans_15"/>
    <property type="match status" value="1"/>
</dbReference>
<dbReference type="SUPFAM" id="SSF53448">
    <property type="entry name" value="Nucleotide-diphospho-sugar transferases"/>
    <property type="match status" value="1"/>
</dbReference>